<gene>
    <name type="primary">USP</name>
    <name type="ordered locus">At5g52560</name>
    <name type="ORF">F6N7.4</name>
</gene>
<dbReference type="EC" id="2.7.7.64"/>
<dbReference type="EMBL" id="DQ324529">
    <property type="protein sequence ID" value="ABC55066.1"/>
    <property type="molecule type" value="mRNA"/>
</dbReference>
<dbReference type="EMBL" id="AB025606">
    <property type="protein sequence ID" value="BAA98074.1"/>
    <property type="status" value="ALT_SEQ"/>
    <property type="molecule type" value="Genomic_DNA"/>
</dbReference>
<dbReference type="EMBL" id="CP002688">
    <property type="protein sequence ID" value="AED96234.1"/>
    <property type="molecule type" value="Genomic_DNA"/>
</dbReference>
<dbReference type="EMBL" id="AF360236">
    <property type="protein sequence ID" value="AAK25946.1"/>
    <property type="molecule type" value="mRNA"/>
</dbReference>
<dbReference type="EMBL" id="AY040035">
    <property type="protein sequence ID" value="AAK64093.1"/>
    <property type="molecule type" value="mRNA"/>
</dbReference>
<dbReference type="RefSeq" id="NP_568775.1">
    <property type="nucleotide sequence ID" value="NM_124635.4"/>
</dbReference>
<dbReference type="SMR" id="Q9C5I1"/>
<dbReference type="FunCoup" id="Q9C5I1">
    <property type="interactions" value="1463"/>
</dbReference>
<dbReference type="STRING" id="3702.Q9C5I1"/>
<dbReference type="iPTMnet" id="Q9C5I1"/>
<dbReference type="PaxDb" id="3702-AT5G52560.1"/>
<dbReference type="ProteomicsDB" id="228664"/>
<dbReference type="EnsemblPlants" id="AT5G52560.1">
    <property type="protein sequence ID" value="AT5G52560.1"/>
    <property type="gene ID" value="AT5G52560"/>
</dbReference>
<dbReference type="GeneID" id="835333"/>
<dbReference type="Gramene" id="AT5G52560.1">
    <property type="protein sequence ID" value="AT5G52560.1"/>
    <property type="gene ID" value="AT5G52560"/>
</dbReference>
<dbReference type="KEGG" id="ath:AT5G52560"/>
<dbReference type="Araport" id="AT5G52560"/>
<dbReference type="TAIR" id="AT5G52560">
    <property type="gene designation" value="USP"/>
</dbReference>
<dbReference type="eggNOG" id="KOG2388">
    <property type="taxonomic scope" value="Eukaryota"/>
</dbReference>
<dbReference type="HOGENOM" id="CLU_016797_0_0_1"/>
<dbReference type="InParanoid" id="Q9C5I1"/>
<dbReference type="OMA" id="PMGPRVV"/>
<dbReference type="PhylomeDB" id="Q9C5I1"/>
<dbReference type="BioCyc" id="ARA:AT5G52560-MONOMER"/>
<dbReference type="BioCyc" id="MetaCyc:AT5G52560-MONOMER"/>
<dbReference type="BRENDA" id="2.7.7.44">
    <property type="organism ID" value="399"/>
</dbReference>
<dbReference type="BRENDA" id="2.7.7.64">
    <property type="organism ID" value="399"/>
</dbReference>
<dbReference type="PRO" id="PR:Q9C5I1"/>
<dbReference type="Proteomes" id="UP000006548">
    <property type="component" value="Chromosome 5"/>
</dbReference>
<dbReference type="ExpressionAtlas" id="Q9C5I1">
    <property type="expression patterns" value="baseline and differential"/>
</dbReference>
<dbReference type="GO" id="GO:0005829">
    <property type="term" value="C:cytosol"/>
    <property type="evidence" value="ECO:0000314"/>
    <property type="project" value="TAIR"/>
</dbReference>
<dbReference type="GO" id="GO:0090406">
    <property type="term" value="C:pollen tube"/>
    <property type="evidence" value="ECO:0000314"/>
    <property type="project" value="TAIR"/>
</dbReference>
<dbReference type="GO" id="GO:0047350">
    <property type="term" value="F:glucuronate-1-phosphate uridylyltransferase activity"/>
    <property type="evidence" value="ECO:0000314"/>
    <property type="project" value="TAIR"/>
</dbReference>
<dbReference type="GO" id="GO:0051748">
    <property type="term" value="F:UTP-monosaccharide-1-phosphate uridylyltransferase activity"/>
    <property type="evidence" value="ECO:0000250"/>
    <property type="project" value="TAIR"/>
</dbReference>
<dbReference type="GO" id="GO:0010491">
    <property type="term" value="F:UTP:arabinose-1-phosphate uridylyltransferase activity"/>
    <property type="evidence" value="ECO:0000314"/>
    <property type="project" value="TAIR"/>
</dbReference>
<dbReference type="GO" id="GO:0017103">
    <property type="term" value="F:UTP:galactose-1-phosphate uridylyltransferase activity"/>
    <property type="evidence" value="ECO:0000314"/>
    <property type="project" value="TAIR"/>
</dbReference>
<dbReference type="GO" id="GO:0003983">
    <property type="term" value="F:UTP:glucose-1-phosphate uridylyltransferase activity"/>
    <property type="evidence" value="ECO:0000314"/>
    <property type="project" value="TAIR"/>
</dbReference>
<dbReference type="GO" id="GO:0047338">
    <property type="term" value="F:UTP:xylose-1-phosphate uridylyltransferase activity"/>
    <property type="evidence" value="ECO:0000314"/>
    <property type="project" value="TAIR"/>
</dbReference>
<dbReference type="GO" id="GO:0009226">
    <property type="term" value="P:nucleotide-sugar biosynthetic process"/>
    <property type="evidence" value="ECO:0000315"/>
    <property type="project" value="TAIR"/>
</dbReference>
<dbReference type="GO" id="GO:0009555">
    <property type="term" value="P:pollen development"/>
    <property type="evidence" value="ECO:0000315"/>
    <property type="project" value="TAIR"/>
</dbReference>
<dbReference type="GO" id="GO:0006011">
    <property type="term" value="P:UDP-alpha-D-glucose metabolic process"/>
    <property type="evidence" value="ECO:0000314"/>
    <property type="project" value="TAIR"/>
</dbReference>
<dbReference type="GO" id="GO:0052573">
    <property type="term" value="P:UDP-D-galactose metabolic process"/>
    <property type="evidence" value="ECO:0000314"/>
    <property type="project" value="TAIR"/>
</dbReference>
<dbReference type="GO" id="GO:0046398">
    <property type="term" value="P:UDP-glucuronate metabolic process"/>
    <property type="evidence" value="ECO:0000314"/>
    <property type="project" value="TAIR"/>
</dbReference>
<dbReference type="GO" id="GO:0033356">
    <property type="term" value="P:UDP-L-arabinose metabolic process"/>
    <property type="evidence" value="ECO:0000315"/>
    <property type="project" value="TAIR"/>
</dbReference>
<dbReference type="CDD" id="cd06424">
    <property type="entry name" value="UGGPase"/>
    <property type="match status" value="1"/>
</dbReference>
<dbReference type="FunFam" id="2.160.10.30:FF:000001">
    <property type="entry name" value="UDP-sugar pyrophosphorylase"/>
    <property type="match status" value="1"/>
</dbReference>
<dbReference type="FunFam" id="3.90.550.10:FF:000091">
    <property type="entry name" value="UDP-sugar pyrophosphorylase"/>
    <property type="match status" value="1"/>
</dbReference>
<dbReference type="Gene3D" id="2.160.10.30">
    <property type="match status" value="1"/>
</dbReference>
<dbReference type="Gene3D" id="3.90.550.10">
    <property type="entry name" value="Spore Coat Polysaccharide Biosynthesis Protein SpsA, Chain A"/>
    <property type="match status" value="1"/>
</dbReference>
<dbReference type="InterPro" id="IPR029044">
    <property type="entry name" value="Nucleotide-diphossugar_trans"/>
</dbReference>
<dbReference type="InterPro" id="IPR039741">
    <property type="entry name" value="UDP-sugar_pyrophosphorylase"/>
</dbReference>
<dbReference type="InterPro" id="IPR002618">
    <property type="entry name" value="UDPGP_fam"/>
</dbReference>
<dbReference type="PANTHER" id="PTHR11952">
    <property type="entry name" value="UDP- GLUCOSE PYROPHOSPHORYLASE"/>
    <property type="match status" value="1"/>
</dbReference>
<dbReference type="PANTHER" id="PTHR11952:SF9">
    <property type="entry name" value="UDP-SUGAR PYROPHOSPHORYLASE"/>
    <property type="match status" value="1"/>
</dbReference>
<dbReference type="Pfam" id="PF01704">
    <property type="entry name" value="UDPGP"/>
    <property type="match status" value="1"/>
</dbReference>
<dbReference type="SUPFAM" id="SSF53448">
    <property type="entry name" value="Nucleotide-diphospho-sugar transferases"/>
    <property type="match status" value="1"/>
</dbReference>
<reference key="1">
    <citation type="submission" date="2005-12" db="EMBL/GenBank/DDBJ databases">
        <title>Biochemical characterization of a nonspecific UDP-sugar pyrophosphorylase from Arabidopsis.</title>
        <authorList>
            <person name="Bar-Peled L."/>
            <person name="Bar-Peled M."/>
        </authorList>
    </citation>
    <scope>NUCLEOTIDE SEQUENCE [MRNA]</scope>
</reference>
<reference key="2">
    <citation type="submission" date="1999-04" db="EMBL/GenBank/DDBJ databases">
        <title>Structural analysis of Arabidopsis thaliana chromosome 5. XI.</title>
        <authorList>
            <person name="Kaneko T."/>
            <person name="Katoh T."/>
            <person name="Asamizu E."/>
            <person name="Sato S."/>
            <person name="Nakamura Y."/>
            <person name="Kotani H."/>
            <person name="Tabata S."/>
        </authorList>
    </citation>
    <scope>NUCLEOTIDE SEQUENCE [LARGE SCALE GENOMIC DNA]</scope>
    <source>
        <strain>cv. Columbia</strain>
    </source>
</reference>
<reference key="3">
    <citation type="journal article" date="2017" name="Plant J.">
        <title>Araport11: a complete reannotation of the Arabidopsis thaliana reference genome.</title>
        <authorList>
            <person name="Cheng C.Y."/>
            <person name="Krishnakumar V."/>
            <person name="Chan A.P."/>
            <person name="Thibaud-Nissen F."/>
            <person name="Schobel S."/>
            <person name="Town C.D."/>
        </authorList>
    </citation>
    <scope>GENOME REANNOTATION</scope>
    <source>
        <strain>cv. Columbia</strain>
    </source>
</reference>
<reference key="4">
    <citation type="journal article" date="2003" name="Science">
        <title>Empirical analysis of transcriptional activity in the Arabidopsis genome.</title>
        <authorList>
            <person name="Yamada K."/>
            <person name="Lim J."/>
            <person name="Dale J.M."/>
            <person name="Chen H."/>
            <person name="Shinn P."/>
            <person name="Palm C.J."/>
            <person name="Southwick A.M."/>
            <person name="Wu H.C."/>
            <person name="Kim C.J."/>
            <person name="Nguyen M."/>
            <person name="Pham P.K."/>
            <person name="Cheuk R.F."/>
            <person name="Karlin-Newmann G."/>
            <person name="Liu S.X."/>
            <person name="Lam B."/>
            <person name="Sakano H."/>
            <person name="Wu T."/>
            <person name="Yu G."/>
            <person name="Miranda M."/>
            <person name="Quach H.L."/>
            <person name="Tripp M."/>
            <person name="Chang C.H."/>
            <person name="Lee J.M."/>
            <person name="Toriumi M.J."/>
            <person name="Chan M.M."/>
            <person name="Tang C.C."/>
            <person name="Onodera C.S."/>
            <person name="Deng J.M."/>
            <person name="Akiyama K."/>
            <person name="Ansari Y."/>
            <person name="Arakawa T."/>
            <person name="Banh J."/>
            <person name="Banno F."/>
            <person name="Bowser L."/>
            <person name="Brooks S.Y."/>
            <person name="Carninci P."/>
            <person name="Chao Q."/>
            <person name="Choy N."/>
            <person name="Enju A."/>
            <person name="Goldsmith A.D."/>
            <person name="Gurjal M."/>
            <person name="Hansen N.F."/>
            <person name="Hayashizaki Y."/>
            <person name="Johnson-Hopson C."/>
            <person name="Hsuan V.W."/>
            <person name="Iida K."/>
            <person name="Karnes M."/>
            <person name="Khan S."/>
            <person name="Koesema E."/>
            <person name="Ishida J."/>
            <person name="Jiang P.X."/>
            <person name="Jones T."/>
            <person name="Kawai J."/>
            <person name="Kamiya A."/>
            <person name="Meyers C."/>
            <person name="Nakajima M."/>
            <person name="Narusaka M."/>
            <person name="Seki M."/>
            <person name="Sakurai T."/>
            <person name="Satou M."/>
            <person name="Tamse R."/>
            <person name="Vaysberg M."/>
            <person name="Wallender E.K."/>
            <person name="Wong C."/>
            <person name="Yamamura Y."/>
            <person name="Yuan S."/>
            <person name="Shinozaki K."/>
            <person name="Davis R.W."/>
            <person name="Theologis A."/>
            <person name="Ecker J.R."/>
        </authorList>
    </citation>
    <scope>NUCLEOTIDE SEQUENCE [LARGE SCALE MRNA]</scope>
    <source>
        <strain>cv. Columbia</strain>
    </source>
</reference>
<reference key="5">
    <citation type="journal article" date="2006" name="Plant Physiol. Biochem.">
        <title>Characterization and expression of Arabidopsis UDP-sugar pyrophosphorylase.</title>
        <authorList>
            <person name="Litterer L.A."/>
            <person name="Schnurr J.A."/>
            <person name="Plaisance K.L."/>
            <person name="Storey K.K."/>
            <person name="Gronwald J.W."/>
            <person name="Somers D.A."/>
        </authorList>
    </citation>
    <scope>FUNCTION</scope>
    <scope>TISSUE SPECIFICITY</scope>
    <scope>DEVELOPMENTAL STAGE</scope>
    <scope>BIOPHYSICOCHEMICAL PROPERTIES</scope>
</reference>
<reference key="6">
    <citation type="journal article" date="2006" name="Planta">
        <title>UDP-sugar pyrophosphorylase is essential for pollen development in Arabidopsis.</title>
        <authorList>
            <person name="Schnurr J.A."/>
            <person name="Storey K.K."/>
            <person name="Jung H.-J.G."/>
            <person name="Somers D.A."/>
            <person name="Gronwald J.W."/>
        </authorList>
    </citation>
    <scope>FUNCTION</scope>
    <scope>DISRUPTION PHENOTYPE</scope>
</reference>
<reference key="7">
    <citation type="journal article" date="2007" name="Biosci. Biotechnol. Biochem.">
        <title>Properties and physiological functions of UDP-sugar pyrophosphorylase in Arabidopsis.</title>
        <authorList>
            <person name="Kotake T."/>
            <person name="Hojo S."/>
            <person name="Yamaguchi D."/>
            <person name="Aohara T."/>
            <person name="Konishi T."/>
            <person name="Tsumuraya Y."/>
        </authorList>
    </citation>
    <scope>FUNCTION</scope>
    <scope>COFACTOR</scope>
    <scope>BIOPHYSICOCHEMICAL PROPERTIES</scope>
    <scope>DISRUPTION PHENOTYPE</scope>
</reference>
<reference key="8">
    <citation type="journal article" date="2012" name="Mol. Cell. Proteomics">
        <title>Comparative large-scale characterisation of plant vs. mammal proteins reveals similar and idiosyncratic N-alpha acetylation features.</title>
        <authorList>
            <person name="Bienvenut W.V."/>
            <person name="Sumpton D."/>
            <person name="Martinez A."/>
            <person name="Lilla S."/>
            <person name="Espagne C."/>
            <person name="Meinnel T."/>
            <person name="Giglione C."/>
        </authorList>
    </citation>
    <scope>ACETYLATION [LARGE SCALE ANALYSIS] AT ALA-2</scope>
    <scope>CLEAVAGE OF INITIATOR METHIONINE [LARGE SCALE ANALYSIS]</scope>
    <scope>IDENTIFICATION BY MASS SPECTROMETRY [LARGE SCALE ANALYSIS]</scope>
</reference>
<reference key="9">
    <citation type="journal article" date="2013" name="Plant J.">
        <title>UDP-sugar pyrophosphorylase is essential for arabinose and xylose recycling, and is required during vegetative and reproductive growth in Arabidopsis.</title>
        <authorList>
            <person name="Geserick C."/>
            <person name="Tenhaken R."/>
        </authorList>
    </citation>
    <scope>FUNCTION</scope>
    <scope>DISRUPTION PHENOTYPE</scope>
</reference>
<feature type="initiator methionine" description="Removed" evidence="6">
    <location>
        <position position="1"/>
    </location>
</feature>
<feature type="chain" id="PRO_0000289978" description="UDP-sugar pyrophosphorylase">
    <location>
        <begin position="2"/>
        <end position="614"/>
    </location>
</feature>
<feature type="modified residue" description="N-acetylalanine" evidence="6">
    <location>
        <position position="2"/>
    </location>
</feature>
<proteinExistence type="evidence at protein level"/>
<comment type="function">
    <text evidence="1 2 3 4">Required for the synthesis of the intine, the pectocellulosic inner wall of developing pollen. May function as the terminal enzyme of the myo-inositol oxidation (MIO) pathway. May also play a role in the salvage pathway for synthesis of nucleotide sugars (PubMed:16557401, PubMed:16757173, PubMed:23373795). Can use a wide range of substrates including glucose-1-phosphate, galactose-1-phosphate, xylose-1-phosphate, arabinose-1-phosphate and glucuronate-1-phosphate (PubMed:17341835).</text>
</comment>
<comment type="catalytic activity">
    <reaction>
        <text>a monosaccharide 1-phosphate + UTP + H(+) = a UDP-monosaccharide + diphosphate</text>
        <dbReference type="Rhea" id="RHEA:13205"/>
        <dbReference type="ChEBI" id="CHEBI:15378"/>
        <dbReference type="ChEBI" id="CHEBI:33019"/>
        <dbReference type="ChEBI" id="CHEBI:46398"/>
        <dbReference type="ChEBI" id="CHEBI:140358"/>
        <dbReference type="ChEBI" id="CHEBI:140359"/>
        <dbReference type="EC" id="2.7.7.64"/>
    </reaction>
</comment>
<comment type="cofactor">
    <cofactor evidence="3">
        <name>Mg(2+)</name>
        <dbReference type="ChEBI" id="CHEBI:18420"/>
    </cofactor>
    <cofactor evidence="3">
        <name>Mn(2+)</name>
        <dbReference type="ChEBI" id="CHEBI:29035"/>
    </cofactor>
</comment>
<comment type="biophysicochemical properties">
    <kinetics>
        <KM evidence="2">0.13 mM for glucuronic acid-1-phosphate</KM>
        <KM evidence="3">0.094 mM for glucuronic acid-1-phosphate</KM>
        <KM evidence="2">0.42 mM for glucose-1-phosphate</KM>
        <KM evidence="3">0.23 mM for glucose-1-phosphate</KM>
        <KM evidence="3">0.27 mM for galactose-1-phosphate</KM>
        <KM evidence="3">1.5 mM for arabinose-1-phosphate</KM>
        <KM evidence="3">1 mM for xylose-1-phosphate</KM>
        <KM evidence="2">0.16 mM for UTP</KM>
        <KM evidence="2">0.56 mM for UDP-glucuronic acid</KM>
        <KM evidence="2">0.72 mM for UPD-glucose</KM>
        <KM evidence="3">0.28 mM for UPD-glucose</KM>
        <KM evidence="2">0.15 mM for pyrophosphate</KM>
        <KM evidence="3">0.16 mM for pyrophosphate</KM>
        <Vmax evidence="2">3.47 nmol/min/mg enzyme for the forward reaction with glucuronic acid-1-phosphate as substrate</Vmax>
        <Vmax evidence="2">5.76 nmol/min/mg enzyme for the forward reaction with glucose-1-phosphate as substrate</Vmax>
        <Vmax evidence="2">4.24 nmol/min/mg enzyme for the reverse reaction with UDP-glucuronic acid as substrate</Vmax>
        <Vmax evidence="2">4.95 nmol/min/mg enzyme for the reverse reaction with UDP-glucose as substrate</Vmax>
        <text>High activity with glucose-1-phosphate &gt; glucuronic acid-1-phosphate &gt; galactose-1-phosphate, but low or no activity with N-acetylglucosamine-1-phosphate, fucose-1-phosphate, mannose-1-phosphate, inositol-1-phosphate or glucose-6-phosphate.</text>
    </kinetics>
    <phDependence>
        <text evidence="2">Optimum pH is 7.5-8.5. Inactive at or below pH 5.0.</text>
    </phDependence>
    <temperatureDependence>
        <text evidence="2">Optimum temperature is 45 degrees Celsius.</text>
    </temperatureDependence>
</comment>
<comment type="tissue specificity">
    <text evidence="2">Ubiquitous, but most abundant in rosette leaves, inflorescences, stems, stamens and pollen.</text>
</comment>
<comment type="developmental stage">
    <text evidence="2">Expressed during pollen development, peaking at the tricellular stage.</text>
</comment>
<comment type="disruption phenotype">
    <text evidence="1 3 4">Plants produce collapsed, nonviable pollen grains (PubMed:16557401, PubMed:23373795). Male sterility (PubMed:17341835).</text>
</comment>
<comment type="similarity">
    <text evidence="5">Belongs to the USP family.</text>
</comment>
<comment type="sequence caution" evidence="5">
    <conflict type="erroneous gene model prediction">
        <sequence resource="EMBL-CDS" id="BAA98074"/>
    </conflict>
</comment>
<protein>
    <recommendedName>
        <fullName>UDP-sugar pyrophosphorylase</fullName>
        <shortName>AtUSP</shortName>
        <ecNumber>2.7.7.64</ecNumber>
    </recommendedName>
</protein>
<keyword id="KW-0007">Acetylation</keyword>
<keyword id="KW-0548">Nucleotidyltransferase</keyword>
<keyword id="KW-1185">Reference proteome</keyword>
<keyword id="KW-0808">Transferase</keyword>
<sequence length="614" mass="67852">MASTVDSNFFSSVPALHSNLGLLSPDQIELAKILLENGQSHLFQQWPELGVDDKEKLAFFDQIARLNSSYPGGLAAYIKTAKELLADSKVGKNPYDGFSPSVPSGENLTFGTDNFIEMEKRGVVEARNAAFVLVAGGLGERLGYNGIKVALPRETTTGTCFLQHYIESILALQEASNKIDSDGSERDIPFIIMTSDDTHSRTLDLLELNSYFGMKPTQVHLLKQEKVACLDDNDARLALDPHNKYSIQTKPHGHGDVHSLLYSSGLLHKWLEAGLKWVLFFQDTNGLLFNAIPASLGVSATKQYHVNSLAVPRKAKEAIGGISKLTHVDGRSMVINVEYNQLDPLLRASGFPDGDVNCETGFSPFPGNINQLILELGPYKDELQKTGGAIKEFVNPKYKDSTKTAFKSSTRLECMMQDYPKTLPPTARVGFTVMDIWLAYAPVKNNPEDAAKVPKGNPYHSATSGEMAIYRANSLILQKAGVKVEEPVKQVLNGQEVEVWSRITWKPKWGMIFSDIKKKVSGNCEVSQRSTMAIKGRNVFIKDLSLDGALIVDSIDDAEVKLGGLIKNNGWTMESVDYKDTSVPEEIRIRGFRFNKVEQLEKKLTQPGKFSVED</sequence>
<evidence type="ECO:0000269" key="1">
    <source>
    </source>
</evidence>
<evidence type="ECO:0000269" key="2">
    <source>
    </source>
</evidence>
<evidence type="ECO:0000269" key="3">
    <source>
    </source>
</evidence>
<evidence type="ECO:0000269" key="4">
    <source>
    </source>
</evidence>
<evidence type="ECO:0000305" key="5"/>
<evidence type="ECO:0007744" key="6">
    <source>
    </source>
</evidence>
<name>USP_ARATH</name>
<organism>
    <name type="scientific">Arabidopsis thaliana</name>
    <name type="common">Mouse-ear cress</name>
    <dbReference type="NCBI Taxonomy" id="3702"/>
    <lineage>
        <taxon>Eukaryota</taxon>
        <taxon>Viridiplantae</taxon>
        <taxon>Streptophyta</taxon>
        <taxon>Embryophyta</taxon>
        <taxon>Tracheophyta</taxon>
        <taxon>Spermatophyta</taxon>
        <taxon>Magnoliopsida</taxon>
        <taxon>eudicotyledons</taxon>
        <taxon>Gunneridae</taxon>
        <taxon>Pentapetalae</taxon>
        <taxon>rosids</taxon>
        <taxon>malvids</taxon>
        <taxon>Brassicales</taxon>
        <taxon>Brassicaceae</taxon>
        <taxon>Camelineae</taxon>
        <taxon>Arabidopsis</taxon>
    </lineage>
</organism>
<accession>Q9C5I1</accession>
<accession>Q9LTG1</accession>